<proteinExistence type="inferred from homology"/>
<feature type="chain" id="PRO_0000178560" description="Large ribosomal subunit protein bL28A">
    <location>
        <begin position="1"/>
        <end position="61"/>
    </location>
</feature>
<name>RL28A_STRCO</name>
<dbReference type="EMBL" id="AL939124">
    <property type="protein sequence ID" value="CAA22407.1"/>
    <property type="molecule type" value="Genomic_DNA"/>
</dbReference>
<dbReference type="PIR" id="T35648">
    <property type="entry name" value="T35648"/>
</dbReference>
<dbReference type="RefSeq" id="NP_629699.1">
    <property type="nucleotide sequence ID" value="NC_003888.3"/>
</dbReference>
<dbReference type="SMR" id="Q9ZBR5"/>
<dbReference type="STRING" id="100226.gene:17763222"/>
<dbReference type="PaxDb" id="100226-SCO5564"/>
<dbReference type="KEGG" id="sco:SCO5564"/>
<dbReference type="PATRIC" id="fig|100226.15.peg.5653"/>
<dbReference type="eggNOG" id="COG0227">
    <property type="taxonomic scope" value="Bacteria"/>
</dbReference>
<dbReference type="HOGENOM" id="CLU_064548_7_0_11"/>
<dbReference type="InParanoid" id="Q9ZBR5"/>
<dbReference type="OrthoDB" id="9805609at2"/>
<dbReference type="PhylomeDB" id="Q9ZBR5"/>
<dbReference type="Proteomes" id="UP000001973">
    <property type="component" value="Chromosome"/>
</dbReference>
<dbReference type="GO" id="GO:1990904">
    <property type="term" value="C:ribonucleoprotein complex"/>
    <property type="evidence" value="ECO:0007669"/>
    <property type="project" value="UniProtKB-KW"/>
</dbReference>
<dbReference type="GO" id="GO:0005840">
    <property type="term" value="C:ribosome"/>
    <property type="evidence" value="ECO:0007669"/>
    <property type="project" value="UniProtKB-KW"/>
</dbReference>
<dbReference type="GO" id="GO:0003735">
    <property type="term" value="F:structural constituent of ribosome"/>
    <property type="evidence" value="ECO:0007669"/>
    <property type="project" value="InterPro"/>
</dbReference>
<dbReference type="GO" id="GO:0006412">
    <property type="term" value="P:translation"/>
    <property type="evidence" value="ECO:0007669"/>
    <property type="project" value="UniProtKB-UniRule"/>
</dbReference>
<dbReference type="FunFam" id="2.30.170.40:FF:000002">
    <property type="entry name" value="50S ribosomal protein L28"/>
    <property type="match status" value="1"/>
</dbReference>
<dbReference type="Gene3D" id="2.30.170.40">
    <property type="entry name" value="Ribosomal protein L28/L24"/>
    <property type="match status" value="1"/>
</dbReference>
<dbReference type="HAMAP" id="MF_00373">
    <property type="entry name" value="Ribosomal_bL28"/>
    <property type="match status" value="1"/>
</dbReference>
<dbReference type="InterPro" id="IPR050096">
    <property type="entry name" value="Bacterial_rp_bL28"/>
</dbReference>
<dbReference type="InterPro" id="IPR026569">
    <property type="entry name" value="Ribosomal_bL28"/>
</dbReference>
<dbReference type="InterPro" id="IPR034704">
    <property type="entry name" value="Ribosomal_bL28/bL31-like_sf"/>
</dbReference>
<dbReference type="InterPro" id="IPR001383">
    <property type="entry name" value="Ribosomal_bL28_bact-type"/>
</dbReference>
<dbReference type="InterPro" id="IPR037147">
    <property type="entry name" value="Ribosomal_bL28_sf"/>
</dbReference>
<dbReference type="NCBIfam" id="TIGR00009">
    <property type="entry name" value="L28"/>
    <property type="match status" value="1"/>
</dbReference>
<dbReference type="PANTHER" id="PTHR39080">
    <property type="entry name" value="50S RIBOSOMAL PROTEIN L28"/>
    <property type="match status" value="1"/>
</dbReference>
<dbReference type="PANTHER" id="PTHR39080:SF1">
    <property type="entry name" value="LARGE RIBOSOMAL SUBUNIT PROTEIN BL28A"/>
    <property type="match status" value="1"/>
</dbReference>
<dbReference type="Pfam" id="PF00830">
    <property type="entry name" value="Ribosomal_L28"/>
    <property type="match status" value="1"/>
</dbReference>
<dbReference type="SUPFAM" id="SSF143800">
    <property type="entry name" value="L28p-like"/>
    <property type="match status" value="1"/>
</dbReference>
<sequence length="61" mass="6639">MAANCDVCGKGPGFGNNISHSHRRTSRRWNPNIQRVRTVVSGTPKRVNACTSCIKAGKVSR</sequence>
<organism>
    <name type="scientific">Streptomyces coelicolor (strain ATCC BAA-471 / A3(2) / M145)</name>
    <dbReference type="NCBI Taxonomy" id="100226"/>
    <lineage>
        <taxon>Bacteria</taxon>
        <taxon>Bacillati</taxon>
        <taxon>Actinomycetota</taxon>
        <taxon>Actinomycetes</taxon>
        <taxon>Kitasatosporales</taxon>
        <taxon>Streptomycetaceae</taxon>
        <taxon>Streptomyces</taxon>
        <taxon>Streptomyces albidoflavus group</taxon>
    </lineage>
</organism>
<evidence type="ECO:0000255" key="1">
    <source>
        <dbReference type="HAMAP-Rule" id="MF_00373"/>
    </source>
</evidence>
<evidence type="ECO:0000305" key="2"/>
<reference key="1">
    <citation type="journal article" date="2002" name="Nature">
        <title>Complete genome sequence of the model actinomycete Streptomyces coelicolor A3(2).</title>
        <authorList>
            <person name="Bentley S.D."/>
            <person name="Chater K.F."/>
            <person name="Cerdeno-Tarraga A.-M."/>
            <person name="Challis G.L."/>
            <person name="Thomson N.R."/>
            <person name="James K.D."/>
            <person name="Harris D.E."/>
            <person name="Quail M.A."/>
            <person name="Kieser H."/>
            <person name="Harper D."/>
            <person name="Bateman A."/>
            <person name="Brown S."/>
            <person name="Chandra G."/>
            <person name="Chen C.W."/>
            <person name="Collins M."/>
            <person name="Cronin A."/>
            <person name="Fraser A."/>
            <person name="Goble A."/>
            <person name="Hidalgo J."/>
            <person name="Hornsby T."/>
            <person name="Howarth S."/>
            <person name="Huang C.-H."/>
            <person name="Kieser T."/>
            <person name="Larke L."/>
            <person name="Murphy L.D."/>
            <person name="Oliver K."/>
            <person name="O'Neil S."/>
            <person name="Rabbinowitsch E."/>
            <person name="Rajandream M.A."/>
            <person name="Rutherford K.M."/>
            <person name="Rutter S."/>
            <person name="Seeger K."/>
            <person name="Saunders D."/>
            <person name="Sharp S."/>
            <person name="Squares R."/>
            <person name="Squares S."/>
            <person name="Taylor K."/>
            <person name="Warren T."/>
            <person name="Wietzorrek A."/>
            <person name="Woodward J.R."/>
            <person name="Barrell B.G."/>
            <person name="Parkhill J."/>
            <person name="Hopwood D.A."/>
        </authorList>
    </citation>
    <scope>NUCLEOTIDE SEQUENCE [LARGE SCALE GENOMIC DNA]</scope>
    <source>
        <strain>ATCC BAA-471 / A3(2) / M145</strain>
    </source>
</reference>
<accession>Q9ZBR5</accession>
<protein>
    <recommendedName>
        <fullName evidence="1">Large ribosomal subunit protein bL28A</fullName>
    </recommendedName>
    <alternativeName>
        <fullName evidence="2">50S ribosomal protein L28 1</fullName>
    </alternativeName>
</protein>
<comment type="similarity">
    <text evidence="1">Belongs to the bacterial ribosomal protein bL28 family.</text>
</comment>
<keyword id="KW-1185">Reference proteome</keyword>
<keyword id="KW-0687">Ribonucleoprotein</keyword>
<keyword id="KW-0689">Ribosomal protein</keyword>
<gene>
    <name type="primary">rpmB1</name>
    <name type="ordered locus">SCO5564</name>
    <name type="ORF">SC7A1.08c</name>
</gene>